<gene>
    <name evidence="1" type="primary">fdhE</name>
    <name type="ordered locus">EcHS_A4119</name>
</gene>
<dbReference type="EMBL" id="CP000802">
    <property type="protein sequence ID" value="ABV08298.1"/>
    <property type="molecule type" value="Genomic_DNA"/>
</dbReference>
<dbReference type="RefSeq" id="WP_000027705.1">
    <property type="nucleotide sequence ID" value="NC_009800.1"/>
</dbReference>
<dbReference type="SMR" id="A8A6Z4"/>
<dbReference type="KEGG" id="ecx:EcHS_A4119"/>
<dbReference type="HOGENOM" id="CLU_055275_0_0_6"/>
<dbReference type="GO" id="GO:0005829">
    <property type="term" value="C:cytosol"/>
    <property type="evidence" value="ECO:0007669"/>
    <property type="project" value="TreeGrafter"/>
</dbReference>
<dbReference type="GO" id="GO:0008199">
    <property type="term" value="F:ferric iron binding"/>
    <property type="evidence" value="ECO:0007669"/>
    <property type="project" value="TreeGrafter"/>
</dbReference>
<dbReference type="GO" id="GO:0051604">
    <property type="term" value="P:protein maturation"/>
    <property type="evidence" value="ECO:0007669"/>
    <property type="project" value="TreeGrafter"/>
</dbReference>
<dbReference type="CDD" id="cd16341">
    <property type="entry name" value="FdhE"/>
    <property type="match status" value="1"/>
</dbReference>
<dbReference type="FunFam" id="3.90.1670.10:FF:000001">
    <property type="entry name" value="Protein FdhE"/>
    <property type="match status" value="1"/>
</dbReference>
<dbReference type="Gene3D" id="3.90.1670.10">
    <property type="entry name" value="FdhE-like domain"/>
    <property type="match status" value="1"/>
</dbReference>
<dbReference type="HAMAP" id="MF_00611">
    <property type="entry name" value="FdeH"/>
    <property type="match status" value="1"/>
</dbReference>
<dbReference type="InterPro" id="IPR024064">
    <property type="entry name" value="FdhE-like_sf"/>
</dbReference>
<dbReference type="InterPro" id="IPR056796">
    <property type="entry name" value="FdhE_C"/>
</dbReference>
<dbReference type="InterPro" id="IPR056797">
    <property type="entry name" value="FdhE_central"/>
</dbReference>
<dbReference type="InterPro" id="IPR056774">
    <property type="entry name" value="FdhE_N"/>
</dbReference>
<dbReference type="InterPro" id="IPR006452">
    <property type="entry name" value="Formate_DH_accessory"/>
</dbReference>
<dbReference type="NCBIfam" id="TIGR01562">
    <property type="entry name" value="FdhE"/>
    <property type="match status" value="1"/>
</dbReference>
<dbReference type="NCBIfam" id="NF002925">
    <property type="entry name" value="PRK03564.1"/>
    <property type="match status" value="1"/>
</dbReference>
<dbReference type="PANTHER" id="PTHR37689">
    <property type="entry name" value="PROTEIN FDHE"/>
    <property type="match status" value="1"/>
</dbReference>
<dbReference type="PANTHER" id="PTHR37689:SF1">
    <property type="entry name" value="PROTEIN FDHE"/>
    <property type="match status" value="1"/>
</dbReference>
<dbReference type="Pfam" id="PF24860">
    <property type="entry name" value="FdhE_C"/>
    <property type="match status" value="1"/>
</dbReference>
<dbReference type="Pfam" id="PF24859">
    <property type="entry name" value="FdhE_central"/>
    <property type="match status" value="1"/>
</dbReference>
<dbReference type="Pfam" id="PF04216">
    <property type="entry name" value="FdhE_N"/>
    <property type="match status" value="1"/>
</dbReference>
<dbReference type="PIRSF" id="PIRSF018296">
    <property type="entry name" value="Format_dh_formtn"/>
    <property type="match status" value="1"/>
</dbReference>
<dbReference type="SUPFAM" id="SSF144020">
    <property type="entry name" value="FdhE-like"/>
    <property type="match status" value="1"/>
</dbReference>
<protein>
    <recommendedName>
        <fullName evidence="1">Protein FdhE</fullName>
    </recommendedName>
</protein>
<comment type="function">
    <text evidence="1">Necessary for formate dehydrogenase activity.</text>
</comment>
<comment type="subcellular location">
    <subcellularLocation>
        <location evidence="1">Cytoplasm</location>
    </subcellularLocation>
</comment>
<comment type="similarity">
    <text evidence="1">Belongs to the FdhE family.</text>
</comment>
<keyword id="KW-0963">Cytoplasm</keyword>
<evidence type="ECO:0000255" key="1">
    <source>
        <dbReference type="HAMAP-Rule" id="MF_00611"/>
    </source>
</evidence>
<name>FDHE_ECOHS</name>
<reference key="1">
    <citation type="journal article" date="2008" name="J. Bacteriol.">
        <title>The pangenome structure of Escherichia coli: comparative genomic analysis of E. coli commensal and pathogenic isolates.</title>
        <authorList>
            <person name="Rasko D.A."/>
            <person name="Rosovitz M.J."/>
            <person name="Myers G.S.A."/>
            <person name="Mongodin E.F."/>
            <person name="Fricke W.F."/>
            <person name="Gajer P."/>
            <person name="Crabtree J."/>
            <person name="Sebaihia M."/>
            <person name="Thomson N.R."/>
            <person name="Chaudhuri R."/>
            <person name="Henderson I.R."/>
            <person name="Sperandio V."/>
            <person name="Ravel J."/>
        </authorList>
    </citation>
    <scope>NUCLEOTIDE SEQUENCE [LARGE SCALE GENOMIC DNA]</scope>
    <source>
        <strain>HS</strain>
    </source>
</reference>
<sequence length="309" mass="34689">MSIRIIPQDELGSSEKRTADMIPPLLFPRLKNLYNRRAERLRELAENNPLGDYLRFAALIAHAQEVVLYDHPLEMDLTARIKEASAQGKPPLDIHVLPRDKHWQKLLMALIAELKPEMSGPALAVIENLEKASTQELEDMASALFASDFSSVSSDKAPFIWAALSLYWAQMANLIPGKARAEYGEQRQYCPVCGSMPVSSMVQIGTTQGLRYLHCNLCETEWHVVRVKCSNCEQSGKLHYWSLDDEQAAIKAESCDDCGTYLKILYQEKDPKIEAVADDLASLVLDARMEQEGYARSSINPFLFPGEGE</sequence>
<feature type="chain" id="PRO_1000061292" description="Protein FdhE">
    <location>
        <begin position="1"/>
        <end position="309"/>
    </location>
</feature>
<proteinExistence type="inferred from homology"/>
<accession>A8A6Z4</accession>
<organism>
    <name type="scientific">Escherichia coli O9:H4 (strain HS)</name>
    <dbReference type="NCBI Taxonomy" id="331112"/>
    <lineage>
        <taxon>Bacteria</taxon>
        <taxon>Pseudomonadati</taxon>
        <taxon>Pseudomonadota</taxon>
        <taxon>Gammaproteobacteria</taxon>
        <taxon>Enterobacterales</taxon>
        <taxon>Enterobacteriaceae</taxon>
        <taxon>Escherichia</taxon>
    </lineage>
</organism>